<organism>
    <name type="scientific">Acaryochloris marina (strain MBIC 11017)</name>
    <dbReference type="NCBI Taxonomy" id="329726"/>
    <lineage>
        <taxon>Bacteria</taxon>
        <taxon>Bacillati</taxon>
        <taxon>Cyanobacteriota</taxon>
        <taxon>Cyanophyceae</taxon>
        <taxon>Acaryochloridales</taxon>
        <taxon>Acaryochloridaceae</taxon>
        <taxon>Acaryochloris</taxon>
    </lineage>
</organism>
<gene>
    <name evidence="1" type="primary">hrcA</name>
    <name type="ordered locus">AM1_1142</name>
</gene>
<proteinExistence type="inferred from homology"/>
<comment type="function">
    <text evidence="1">Negative regulator of class I heat shock genes (grpE-dnaK-dnaJ and groELS operons). Prevents heat-shock induction of these operons.</text>
</comment>
<comment type="similarity">
    <text evidence="1">Belongs to the HrcA family.</text>
</comment>
<name>HRCA_ACAM1</name>
<accession>B0C2W4</accession>
<keyword id="KW-1185">Reference proteome</keyword>
<keyword id="KW-0678">Repressor</keyword>
<keyword id="KW-0346">Stress response</keyword>
<keyword id="KW-0804">Transcription</keyword>
<keyword id="KW-0805">Transcription regulation</keyword>
<evidence type="ECO:0000255" key="1">
    <source>
        <dbReference type="HAMAP-Rule" id="MF_00081"/>
    </source>
</evidence>
<sequence>MDLSLTNRQQQVLRATVDHYIATAEPVGSKALAREYALSISPATIRNVMGRLEEEGLLFQPHTSAGRVPSDFGYRHYVDELVMPSTTLMSQIKQALDQKLRTDSWIFEVLLRDAAQILATLSGCVALITLPQAATSTIRHLHLVQVEPHRVMLILVTDAYETQSVMMELPHSAWDEVDPDRIEQELQILSNFLNHHFVGSSLQDLVALDPCELDREFQKYTDFLKILLTDLTQQCKSLSPKNILVGGLAEVLRQPEFSELQQAQTLIHLLEDGQDLLRPLFNELMADEIKQGADVVPRSTKVNVRIGSENSLESIQAYSLVSSTYQKGELPMGSVGVLGPTRMAYEKVIALVTVTADYLSTCLTQVA</sequence>
<protein>
    <recommendedName>
        <fullName evidence="1">Heat-inducible transcription repressor HrcA</fullName>
    </recommendedName>
</protein>
<reference key="1">
    <citation type="journal article" date="2008" name="Proc. Natl. Acad. Sci. U.S.A.">
        <title>Niche adaptation and genome expansion in the chlorophyll d-producing cyanobacterium Acaryochloris marina.</title>
        <authorList>
            <person name="Swingley W.D."/>
            <person name="Chen M."/>
            <person name="Cheung P.C."/>
            <person name="Conrad A.L."/>
            <person name="Dejesa L.C."/>
            <person name="Hao J."/>
            <person name="Honchak B.M."/>
            <person name="Karbach L.E."/>
            <person name="Kurdoglu A."/>
            <person name="Lahiri S."/>
            <person name="Mastrian S.D."/>
            <person name="Miyashita H."/>
            <person name="Page L."/>
            <person name="Ramakrishna P."/>
            <person name="Satoh S."/>
            <person name="Sattley W.M."/>
            <person name="Shimada Y."/>
            <person name="Taylor H.L."/>
            <person name="Tomo T."/>
            <person name="Tsuchiya T."/>
            <person name="Wang Z.T."/>
            <person name="Raymond J."/>
            <person name="Mimuro M."/>
            <person name="Blankenship R.E."/>
            <person name="Touchman J.W."/>
        </authorList>
    </citation>
    <scope>NUCLEOTIDE SEQUENCE [LARGE SCALE GENOMIC DNA]</scope>
    <source>
        <strain>MBIC 11017</strain>
    </source>
</reference>
<dbReference type="EMBL" id="CP000828">
    <property type="protein sequence ID" value="ABW26180.1"/>
    <property type="molecule type" value="Genomic_DNA"/>
</dbReference>
<dbReference type="RefSeq" id="WP_012161730.1">
    <property type="nucleotide sequence ID" value="NC_009925.1"/>
</dbReference>
<dbReference type="SMR" id="B0C2W4"/>
<dbReference type="STRING" id="329726.AM1_1142"/>
<dbReference type="KEGG" id="amr:AM1_1142"/>
<dbReference type="eggNOG" id="COG1420">
    <property type="taxonomic scope" value="Bacteria"/>
</dbReference>
<dbReference type="HOGENOM" id="CLU_050019_1_0_3"/>
<dbReference type="OrthoDB" id="9783139at2"/>
<dbReference type="Proteomes" id="UP000000268">
    <property type="component" value="Chromosome"/>
</dbReference>
<dbReference type="GO" id="GO:0003677">
    <property type="term" value="F:DNA binding"/>
    <property type="evidence" value="ECO:0007669"/>
    <property type="project" value="InterPro"/>
</dbReference>
<dbReference type="GO" id="GO:0045892">
    <property type="term" value="P:negative regulation of DNA-templated transcription"/>
    <property type="evidence" value="ECO:0007669"/>
    <property type="project" value="UniProtKB-UniRule"/>
</dbReference>
<dbReference type="Gene3D" id="3.30.450.40">
    <property type="match status" value="1"/>
</dbReference>
<dbReference type="Gene3D" id="1.10.10.10">
    <property type="entry name" value="Winged helix-like DNA-binding domain superfamily/Winged helix DNA-binding domain"/>
    <property type="match status" value="1"/>
</dbReference>
<dbReference type="HAMAP" id="MF_00081">
    <property type="entry name" value="HrcA"/>
    <property type="match status" value="1"/>
</dbReference>
<dbReference type="InterPro" id="IPR029016">
    <property type="entry name" value="GAF-like_dom_sf"/>
</dbReference>
<dbReference type="InterPro" id="IPR002571">
    <property type="entry name" value="HrcA"/>
</dbReference>
<dbReference type="InterPro" id="IPR021153">
    <property type="entry name" value="HrcA_C"/>
</dbReference>
<dbReference type="InterPro" id="IPR036388">
    <property type="entry name" value="WH-like_DNA-bd_sf"/>
</dbReference>
<dbReference type="InterPro" id="IPR036390">
    <property type="entry name" value="WH_DNA-bd_sf"/>
</dbReference>
<dbReference type="NCBIfam" id="TIGR00331">
    <property type="entry name" value="hrcA"/>
    <property type="match status" value="1"/>
</dbReference>
<dbReference type="PANTHER" id="PTHR34824">
    <property type="entry name" value="HEAT-INDUCIBLE TRANSCRIPTION REPRESSOR HRCA"/>
    <property type="match status" value="1"/>
</dbReference>
<dbReference type="PANTHER" id="PTHR34824:SF1">
    <property type="entry name" value="HEAT-INDUCIBLE TRANSCRIPTION REPRESSOR HRCA"/>
    <property type="match status" value="1"/>
</dbReference>
<dbReference type="Pfam" id="PF01628">
    <property type="entry name" value="HrcA"/>
    <property type="match status" value="1"/>
</dbReference>
<dbReference type="PIRSF" id="PIRSF005485">
    <property type="entry name" value="HrcA"/>
    <property type="match status" value="1"/>
</dbReference>
<dbReference type="SUPFAM" id="SSF55781">
    <property type="entry name" value="GAF domain-like"/>
    <property type="match status" value="1"/>
</dbReference>
<dbReference type="SUPFAM" id="SSF46785">
    <property type="entry name" value="Winged helix' DNA-binding domain"/>
    <property type="match status" value="1"/>
</dbReference>
<feature type="chain" id="PRO_1000075277" description="Heat-inducible transcription repressor HrcA">
    <location>
        <begin position="1"/>
        <end position="367"/>
    </location>
</feature>